<gene>
    <name evidence="1" type="primary">tpx</name>
    <name type="ordered locus">CA_C3306</name>
</gene>
<keyword id="KW-0049">Antioxidant</keyword>
<keyword id="KW-1015">Disulfide bond</keyword>
<keyword id="KW-0560">Oxidoreductase</keyword>
<keyword id="KW-0575">Peroxidase</keyword>
<keyword id="KW-0676">Redox-active center</keyword>
<keyword id="KW-1185">Reference proteome</keyword>
<name>TPX_CLOAB</name>
<reference key="1">
    <citation type="journal article" date="2001" name="J. Bacteriol.">
        <title>Genome sequence and comparative analysis of the solvent-producing bacterium Clostridium acetobutylicum.</title>
        <authorList>
            <person name="Noelling J."/>
            <person name="Breton G."/>
            <person name="Omelchenko M.V."/>
            <person name="Makarova K.S."/>
            <person name="Zeng Q."/>
            <person name="Gibson R."/>
            <person name="Lee H.M."/>
            <person name="Dubois J."/>
            <person name="Qiu D."/>
            <person name="Hitti J."/>
            <person name="Wolf Y.I."/>
            <person name="Tatusov R.L."/>
            <person name="Sabathe F."/>
            <person name="Doucette-Stamm L.A."/>
            <person name="Soucaille P."/>
            <person name="Daly M.J."/>
            <person name="Bennett G.N."/>
            <person name="Koonin E.V."/>
            <person name="Smith D.R."/>
        </authorList>
    </citation>
    <scope>NUCLEOTIDE SEQUENCE [LARGE SCALE GENOMIC DNA]</scope>
    <source>
        <strain>ATCC 824 / DSM 792 / JCM 1419 / IAM 19013 / LMG 5710 / NBRC 13948 / NRRL B-527 / VKM B-1787 / 2291 / W</strain>
    </source>
</reference>
<feature type="chain" id="PRO_0000187873" description="Thiol peroxidase">
    <location>
        <begin position="1"/>
        <end position="164"/>
    </location>
</feature>
<feature type="domain" description="Thioredoxin" evidence="1">
    <location>
        <begin position="17"/>
        <end position="162"/>
    </location>
</feature>
<feature type="active site" description="Cysteine sulfenic acid (-SOH) intermediate" evidence="1">
    <location>
        <position position="58"/>
    </location>
</feature>
<feature type="disulfide bond" description="Redox-active" evidence="1">
    <location>
        <begin position="58"/>
        <end position="92"/>
    </location>
</feature>
<proteinExistence type="inferred from homology"/>
<organism>
    <name type="scientific">Clostridium acetobutylicum (strain ATCC 824 / DSM 792 / JCM 1419 / IAM 19013 / LMG 5710 / NBRC 13948 / NRRL B-527 / VKM B-1787 / 2291 / W)</name>
    <dbReference type="NCBI Taxonomy" id="272562"/>
    <lineage>
        <taxon>Bacteria</taxon>
        <taxon>Bacillati</taxon>
        <taxon>Bacillota</taxon>
        <taxon>Clostridia</taxon>
        <taxon>Eubacteriales</taxon>
        <taxon>Clostridiaceae</taxon>
        <taxon>Clostridium</taxon>
    </lineage>
</organism>
<dbReference type="EC" id="1.11.1.24" evidence="1"/>
<dbReference type="EMBL" id="AE001437">
    <property type="protein sequence ID" value="AAK81238.1"/>
    <property type="molecule type" value="Genomic_DNA"/>
</dbReference>
<dbReference type="PIR" id="C97306">
    <property type="entry name" value="C97306"/>
</dbReference>
<dbReference type="RefSeq" id="NP_349898.1">
    <property type="nucleotide sequence ID" value="NC_003030.1"/>
</dbReference>
<dbReference type="RefSeq" id="WP_010966578.1">
    <property type="nucleotide sequence ID" value="NC_003030.1"/>
</dbReference>
<dbReference type="SMR" id="Q97E14"/>
<dbReference type="STRING" id="272562.CA_C3306"/>
<dbReference type="GeneID" id="44999800"/>
<dbReference type="KEGG" id="cac:CA_C3306"/>
<dbReference type="PATRIC" id="fig|272562.8.peg.3484"/>
<dbReference type="eggNOG" id="COG2077">
    <property type="taxonomic scope" value="Bacteria"/>
</dbReference>
<dbReference type="HOGENOM" id="CLU_042529_12_0_9"/>
<dbReference type="OrthoDB" id="9781543at2"/>
<dbReference type="Proteomes" id="UP000000814">
    <property type="component" value="Chromosome"/>
</dbReference>
<dbReference type="GO" id="GO:0008379">
    <property type="term" value="F:thioredoxin peroxidase activity"/>
    <property type="evidence" value="ECO:0007669"/>
    <property type="project" value="UniProtKB-UniRule"/>
</dbReference>
<dbReference type="CDD" id="cd03014">
    <property type="entry name" value="PRX_Atyp2cys"/>
    <property type="match status" value="1"/>
</dbReference>
<dbReference type="Gene3D" id="3.40.30.10">
    <property type="entry name" value="Glutaredoxin"/>
    <property type="match status" value="1"/>
</dbReference>
<dbReference type="HAMAP" id="MF_00269">
    <property type="entry name" value="Tpx"/>
    <property type="match status" value="1"/>
</dbReference>
<dbReference type="InterPro" id="IPR013740">
    <property type="entry name" value="Redoxin"/>
</dbReference>
<dbReference type="InterPro" id="IPR036249">
    <property type="entry name" value="Thioredoxin-like_sf"/>
</dbReference>
<dbReference type="InterPro" id="IPR013766">
    <property type="entry name" value="Thioredoxin_domain"/>
</dbReference>
<dbReference type="InterPro" id="IPR002065">
    <property type="entry name" value="TPX"/>
</dbReference>
<dbReference type="InterPro" id="IPR018219">
    <property type="entry name" value="Tpx_CS"/>
</dbReference>
<dbReference type="InterPro" id="IPR050455">
    <property type="entry name" value="Tpx_Peroxidase_subfamily"/>
</dbReference>
<dbReference type="NCBIfam" id="NF001808">
    <property type="entry name" value="PRK00522.1"/>
    <property type="match status" value="1"/>
</dbReference>
<dbReference type="PANTHER" id="PTHR43110">
    <property type="entry name" value="THIOL PEROXIDASE"/>
    <property type="match status" value="1"/>
</dbReference>
<dbReference type="PANTHER" id="PTHR43110:SF1">
    <property type="entry name" value="THIOL PEROXIDASE"/>
    <property type="match status" value="1"/>
</dbReference>
<dbReference type="Pfam" id="PF08534">
    <property type="entry name" value="Redoxin"/>
    <property type="match status" value="1"/>
</dbReference>
<dbReference type="SUPFAM" id="SSF52833">
    <property type="entry name" value="Thioredoxin-like"/>
    <property type="match status" value="1"/>
</dbReference>
<dbReference type="PROSITE" id="PS51352">
    <property type="entry name" value="THIOREDOXIN_2"/>
    <property type="match status" value="1"/>
</dbReference>
<dbReference type="PROSITE" id="PS01265">
    <property type="entry name" value="TPX"/>
    <property type="match status" value="1"/>
</dbReference>
<comment type="function">
    <text evidence="1">Thiol-specific peroxidase that catalyzes the reduction of hydrogen peroxide and organic hydroperoxides to water and alcohols, respectively. Plays a role in cell protection against oxidative stress by detoxifying peroxides.</text>
</comment>
<comment type="catalytic activity">
    <reaction evidence="1">
        <text>a hydroperoxide + [thioredoxin]-dithiol = an alcohol + [thioredoxin]-disulfide + H2O</text>
        <dbReference type="Rhea" id="RHEA:62620"/>
        <dbReference type="Rhea" id="RHEA-COMP:10698"/>
        <dbReference type="Rhea" id="RHEA-COMP:10700"/>
        <dbReference type="ChEBI" id="CHEBI:15377"/>
        <dbReference type="ChEBI" id="CHEBI:29950"/>
        <dbReference type="ChEBI" id="CHEBI:30879"/>
        <dbReference type="ChEBI" id="CHEBI:35924"/>
        <dbReference type="ChEBI" id="CHEBI:50058"/>
        <dbReference type="EC" id="1.11.1.24"/>
    </reaction>
</comment>
<comment type="subunit">
    <text evidence="1">Homodimer.</text>
</comment>
<comment type="miscellaneous">
    <text evidence="1">The active site is a conserved redox-active cysteine residue, the peroxidatic cysteine (C(P)), which makes the nucleophilic attack on the peroxide substrate. The peroxide oxidizes the C(P)-SH to cysteine sulfenic acid (C(P)-SOH), which then reacts with another cysteine residue, the resolving cysteine (C(R)), to form a disulfide bridge. The disulfide is subsequently reduced by an appropriate electron donor to complete the catalytic cycle. In this atypical 2-Cys peroxiredoxin, C(R) is present in the same subunit to form an intramolecular disulfide. The disulfide is subsequently reduced by thioredoxin.</text>
</comment>
<comment type="similarity">
    <text evidence="1">Belongs to the peroxiredoxin family. Tpx subfamily.</text>
</comment>
<evidence type="ECO:0000255" key="1">
    <source>
        <dbReference type="HAMAP-Rule" id="MF_00269"/>
    </source>
</evidence>
<sequence>MKVKFKGKEVTLEGTEIKVGDTFPDFVAVNSSLEPVMLKNTNRVRVFLAVPSVDTPVCDLEVKTFNARASEIDGVSIYTISMDLPFAQSRWCGAEGIKNVTTLSDYRDRAFGKNTGTYIKELGLLARAVFVVDSSNKVTYANYLEEVSGYPNYDEVLQAAQAAK</sequence>
<protein>
    <recommendedName>
        <fullName evidence="1">Thiol peroxidase</fullName>
        <shortName evidence="1">Tpx</shortName>
        <ecNumber evidence="1">1.11.1.24</ecNumber>
    </recommendedName>
    <alternativeName>
        <fullName evidence="1">Peroxiredoxin tpx</fullName>
        <shortName evidence="1">Prx</shortName>
    </alternativeName>
    <alternativeName>
        <fullName evidence="1">Thioredoxin peroxidase</fullName>
    </alternativeName>
    <alternativeName>
        <fullName evidence="1">Thioredoxin-dependent peroxiredoxin</fullName>
    </alternativeName>
</protein>
<accession>Q97E14</accession>